<sequence>MLAPKKQKFRKAHKGRVASTAKAGTTLAFGSFGLKSIDGWRVTARQIEAGRKAATRCMKRQGRLWIRIFPDVPVSQKPAEVRMGKGKGSPEFFAVRVSPGRIMFEIEGVEENVALRALELASAKLPVRTRIVRRYE</sequence>
<name>RL16_RICRS</name>
<protein>
    <recommendedName>
        <fullName evidence="1">Large ribosomal subunit protein uL16</fullName>
    </recommendedName>
    <alternativeName>
        <fullName evidence="2">50S ribosomal protein L16</fullName>
    </alternativeName>
</protein>
<proteinExistence type="inferred from homology"/>
<keyword id="KW-0687">Ribonucleoprotein</keyword>
<keyword id="KW-0689">Ribosomal protein</keyword>
<keyword id="KW-0694">RNA-binding</keyword>
<keyword id="KW-0699">rRNA-binding</keyword>
<keyword id="KW-0820">tRNA-binding</keyword>
<feature type="chain" id="PRO_1000054694" description="Large ribosomal subunit protein uL16">
    <location>
        <begin position="1"/>
        <end position="136"/>
    </location>
</feature>
<evidence type="ECO:0000255" key="1">
    <source>
        <dbReference type="HAMAP-Rule" id="MF_01342"/>
    </source>
</evidence>
<evidence type="ECO:0000305" key="2"/>
<dbReference type="EMBL" id="CP000848">
    <property type="protein sequence ID" value="ABV76587.1"/>
    <property type="molecule type" value="Genomic_DNA"/>
</dbReference>
<dbReference type="RefSeq" id="WP_012151148.1">
    <property type="nucleotide sequence ID" value="NZ_CP121767.1"/>
</dbReference>
<dbReference type="SMR" id="A8GT62"/>
<dbReference type="GeneID" id="79937663"/>
<dbReference type="KEGG" id="rri:A1G_05520"/>
<dbReference type="HOGENOM" id="CLU_078858_2_1_5"/>
<dbReference type="Proteomes" id="UP000006832">
    <property type="component" value="Chromosome"/>
</dbReference>
<dbReference type="GO" id="GO:0022625">
    <property type="term" value="C:cytosolic large ribosomal subunit"/>
    <property type="evidence" value="ECO:0007669"/>
    <property type="project" value="TreeGrafter"/>
</dbReference>
<dbReference type="GO" id="GO:0019843">
    <property type="term" value="F:rRNA binding"/>
    <property type="evidence" value="ECO:0007669"/>
    <property type="project" value="UniProtKB-UniRule"/>
</dbReference>
<dbReference type="GO" id="GO:0003735">
    <property type="term" value="F:structural constituent of ribosome"/>
    <property type="evidence" value="ECO:0007669"/>
    <property type="project" value="InterPro"/>
</dbReference>
<dbReference type="GO" id="GO:0000049">
    <property type="term" value="F:tRNA binding"/>
    <property type="evidence" value="ECO:0007669"/>
    <property type="project" value="UniProtKB-KW"/>
</dbReference>
<dbReference type="GO" id="GO:0006412">
    <property type="term" value="P:translation"/>
    <property type="evidence" value="ECO:0007669"/>
    <property type="project" value="UniProtKB-UniRule"/>
</dbReference>
<dbReference type="CDD" id="cd01433">
    <property type="entry name" value="Ribosomal_L16_L10e"/>
    <property type="match status" value="1"/>
</dbReference>
<dbReference type="FunFam" id="3.90.1170.10:FF:000001">
    <property type="entry name" value="50S ribosomal protein L16"/>
    <property type="match status" value="1"/>
</dbReference>
<dbReference type="Gene3D" id="3.90.1170.10">
    <property type="entry name" value="Ribosomal protein L10e/L16"/>
    <property type="match status" value="1"/>
</dbReference>
<dbReference type="HAMAP" id="MF_01342">
    <property type="entry name" value="Ribosomal_uL16"/>
    <property type="match status" value="1"/>
</dbReference>
<dbReference type="InterPro" id="IPR047873">
    <property type="entry name" value="Ribosomal_uL16"/>
</dbReference>
<dbReference type="InterPro" id="IPR000114">
    <property type="entry name" value="Ribosomal_uL16_bact-type"/>
</dbReference>
<dbReference type="InterPro" id="IPR020798">
    <property type="entry name" value="Ribosomal_uL16_CS"/>
</dbReference>
<dbReference type="InterPro" id="IPR016180">
    <property type="entry name" value="Ribosomal_uL16_dom"/>
</dbReference>
<dbReference type="InterPro" id="IPR036920">
    <property type="entry name" value="Ribosomal_uL16_sf"/>
</dbReference>
<dbReference type="NCBIfam" id="TIGR01164">
    <property type="entry name" value="rplP_bact"/>
    <property type="match status" value="1"/>
</dbReference>
<dbReference type="PANTHER" id="PTHR12220">
    <property type="entry name" value="50S/60S RIBOSOMAL PROTEIN L16"/>
    <property type="match status" value="1"/>
</dbReference>
<dbReference type="PANTHER" id="PTHR12220:SF13">
    <property type="entry name" value="LARGE RIBOSOMAL SUBUNIT PROTEIN UL16M"/>
    <property type="match status" value="1"/>
</dbReference>
<dbReference type="Pfam" id="PF00252">
    <property type="entry name" value="Ribosomal_L16"/>
    <property type="match status" value="1"/>
</dbReference>
<dbReference type="PRINTS" id="PR00060">
    <property type="entry name" value="RIBOSOMALL16"/>
</dbReference>
<dbReference type="SUPFAM" id="SSF54686">
    <property type="entry name" value="Ribosomal protein L16p/L10e"/>
    <property type="match status" value="1"/>
</dbReference>
<dbReference type="PROSITE" id="PS00586">
    <property type="entry name" value="RIBOSOMAL_L16_1"/>
    <property type="match status" value="1"/>
</dbReference>
<dbReference type="PROSITE" id="PS00701">
    <property type="entry name" value="RIBOSOMAL_L16_2"/>
    <property type="match status" value="1"/>
</dbReference>
<reference key="1">
    <citation type="submission" date="2007-09" db="EMBL/GenBank/DDBJ databases">
        <title>Complete genome sequence of Rickettsia rickettsii.</title>
        <authorList>
            <person name="Madan A."/>
            <person name="Fahey J."/>
            <person name="Helton E."/>
            <person name="Ketteman M."/>
            <person name="Madan A."/>
            <person name="Rodrigues S."/>
            <person name="Sanchez A."/>
            <person name="Dasch G."/>
            <person name="Eremeeva M."/>
        </authorList>
    </citation>
    <scope>NUCLEOTIDE SEQUENCE [LARGE SCALE GENOMIC DNA]</scope>
    <source>
        <strain>Sheila Smith</strain>
    </source>
</reference>
<gene>
    <name evidence="1" type="primary">rplP</name>
    <name type="ordered locus">A1G_05520</name>
</gene>
<comment type="function">
    <text evidence="1">Binds 23S rRNA and is also seen to make contacts with the A and possibly P site tRNAs.</text>
</comment>
<comment type="subunit">
    <text evidence="1">Part of the 50S ribosomal subunit.</text>
</comment>
<comment type="similarity">
    <text evidence="1">Belongs to the universal ribosomal protein uL16 family.</text>
</comment>
<accession>A8GT62</accession>
<organism>
    <name type="scientific">Rickettsia rickettsii (strain Sheila Smith)</name>
    <dbReference type="NCBI Taxonomy" id="392021"/>
    <lineage>
        <taxon>Bacteria</taxon>
        <taxon>Pseudomonadati</taxon>
        <taxon>Pseudomonadota</taxon>
        <taxon>Alphaproteobacteria</taxon>
        <taxon>Rickettsiales</taxon>
        <taxon>Rickettsiaceae</taxon>
        <taxon>Rickettsieae</taxon>
        <taxon>Rickettsia</taxon>
        <taxon>spotted fever group</taxon>
    </lineage>
</organism>